<protein>
    <recommendedName>
        <fullName evidence="1">Putative N-acetylmannosamine-6-phosphate 2-epimerase</fullName>
        <ecNumber evidence="1">5.1.3.9</ecNumber>
    </recommendedName>
    <alternativeName>
        <fullName evidence="1">ManNAc-6-P epimerase</fullName>
    </alternativeName>
</protein>
<dbReference type="EC" id="5.1.3.9" evidence="1"/>
<dbReference type="EMBL" id="CP001600">
    <property type="protein sequence ID" value="ACR67828.1"/>
    <property type="molecule type" value="Genomic_DNA"/>
</dbReference>
<dbReference type="RefSeq" id="WP_015870025.1">
    <property type="nucleotide sequence ID" value="NZ_CP169062.1"/>
</dbReference>
<dbReference type="SMR" id="C5B754"/>
<dbReference type="STRING" id="67780.B6E78_13695"/>
<dbReference type="KEGG" id="eic:NT01EI_0599"/>
<dbReference type="PATRIC" id="fig|634503.3.peg.543"/>
<dbReference type="HOGENOM" id="CLU_086300_0_0_6"/>
<dbReference type="OrthoDB" id="9810372at2"/>
<dbReference type="UniPathway" id="UPA00629">
    <property type="reaction ID" value="UER00682"/>
</dbReference>
<dbReference type="Proteomes" id="UP000001485">
    <property type="component" value="Chromosome"/>
</dbReference>
<dbReference type="GO" id="GO:0005829">
    <property type="term" value="C:cytosol"/>
    <property type="evidence" value="ECO:0007669"/>
    <property type="project" value="TreeGrafter"/>
</dbReference>
<dbReference type="GO" id="GO:0047465">
    <property type="term" value="F:N-acylglucosamine-6-phosphate 2-epimerase activity"/>
    <property type="evidence" value="ECO:0007669"/>
    <property type="project" value="UniProtKB-EC"/>
</dbReference>
<dbReference type="GO" id="GO:0005975">
    <property type="term" value="P:carbohydrate metabolic process"/>
    <property type="evidence" value="ECO:0007669"/>
    <property type="project" value="UniProtKB-UniRule"/>
</dbReference>
<dbReference type="GO" id="GO:0006053">
    <property type="term" value="P:N-acetylmannosamine catabolic process"/>
    <property type="evidence" value="ECO:0007669"/>
    <property type="project" value="TreeGrafter"/>
</dbReference>
<dbReference type="GO" id="GO:0019262">
    <property type="term" value="P:N-acetylneuraminate catabolic process"/>
    <property type="evidence" value="ECO:0007669"/>
    <property type="project" value="UniProtKB-UniRule"/>
</dbReference>
<dbReference type="CDD" id="cd04729">
    <property type="entry name" value="NanE"/>
    <property type="match status" value="1"/>
</dbReference>
<dbReference type="FunFam" id="3.20.20.70:FF:000035">
    <property type="entry name" value="Putative N-acetylmannosamine-6-phosphate 2-epimerase"/>
    <property type="match status" value="1"/>
</dbReference>
<dbReference type="Gene3D" id="3.20.20.70">
    <property type="entry name" value="Aldolase class I"/>
    <property type="match status" value="1"/>
</dbReference>
<dbReference type="HAMAP" id="MF_01235">
    <property type="entry name" value="ManNAc6P_epimer"/>
    <property type="match status" value="1"/>
</dbReference>
<dbReference type="InterPro" id="IPR013785">
    <property type="entry name" value="Aldolase_TIM"/>
</dbReference>
<dbReference type="InterPro" id="IPR007260">
    <property type="entry name" value="NanE"/>
</dbReference>
<dbReference type="InterPro" id="IPR011060">
    <property type="entry name" value="RibuloseP-bd_barrel"/>
</dbReference>
<dbReference type="NCBIfam" id="NF002231">
    <property type="entry name" value="PRK01130.1"/>
    <property type="match status" value="1"/>
</dbReference>
<dbReference type="PANTHER" id="PTHR36204">
    <property type="entry name" value="N-ACETYLMANNOSAMINE-6-PHOSPHATE 2-EPIMERASE-RELATED"/>
    <property type="match status" value="1"/>
</dbReference>
<dbReference type="PANTHER" id="PTHR36204:SF1">
    <property type="entry name" value="N-ACETYLMANNOSAMINE-6-PHOSPHATE 2-EPIMERASE-RELATED"/>
    <property type="match status" value="1"/>
</dbReference>
<dbReference type="Pfam" id="PF04131">
    <property type="entry name" value="NanE"/>
    <property type="match status" value="1"/>
</dbReference>
<dbReference type="SUPFAM" id="SSF51366">
    <property type="entry name" value="Ribulose-phoshate binding barrel"/>
    <property type="match status" value="1"/>
</dbReference>
<accession>C5B754</accession>
<name>NANE_EDWI9</name>
<reference key="1">
    <citation type="submission" date="2009-03" db="EMBL/GenBank/DDBJ databases">
        <title>Complete genome sequence of Edwardsiella ictaluri 93-146.</title>
        <authorList>
            <person name="Williams M.L."/>
            <person name="Gillaspy A.F."/>
            <person name="Dyer D.W."/>
            <person name="Thune R.L."/>
            <person name="Waldbieser G.C."/>
            <person name="Schuster S.C."/>
            <person name="Gipson J."/>
            <person name="Zaitshik J."/>
            <person name="Landry C."/>
            <person name="Lawrence M.L."/>
        </authorList>
    </citation>
    <scope>NUCLEOTIDE SEQUENCE [LARGE SCALE GENOMIC DNA]</scope>
    <source>
        <strain>93-146</strain>
    </source>
</reference>
<feature type="chain" id="PRO_1000214034" description="Putative N-acetylmannosamine-6-phosphate 2-epimerase">
    <location>
        <begin position="1"/>
        <end position="235"/>
    </location>
</feature>
<proteinExistence type="inferred from homology"/>
<organism>
    <name type="scientific">Edwardsiella ictaluri (strain 93-146)</name>
    <dbReference type="NCBI Taxonomy" id="634503"/>
    <lineage>
        <taxon>Bacteria</taxon>
        <taxon>Pseudomonadati</taxon>
        <taxon>Pseudomonadota</taxon>
        <taxon>Gammaproteobacteria</taxon>
        <taxon>Enterobacterales</taxon>
        <taxon>Hafniaceae</taxon>
        <taxon>Edwardsiella</taxon>
    </lineage>
</organism>
<comment type="function">
    <text evidence="1">Converts N-acetylmannosamine-6-phosphate (ManNAc-6-P) to N-acetylglucosamine-6-phosphate (GlcNAc-6-P).</text>
</comment>
<comment type="catalytic activity">
    <reaction evidence="1">
        <text>an N-acyl-D-glucosamine 6-phosphate = an N-acyl-D-mannosamine 6-phosphate</text>
        <dbReference type="Rhea" id="RHEA:23932"/>
        <dbReference type="ChEBI" id="CHEBI:57599"/>
        <dbReference type="ChEBI" id="CHEBI:57666"/>
        <dbReference type="EC" id="5.1.3.9"/>
    </reaction>
</comment>
<comment type="pathway">
    <text evidence="1">Amino-sugar metabolism; N-acetylneuraminate degradation; D-fructose 6-phosphate from N-acetylneuraminate: step 3/5.</text>
</comment>
<comment type="similarity">
    <text evidence="1">Belongs to the NanE family.</text>
</comment>
<evidence type="ECO:0000255" key="1">
    <source>
        <dbReference type="HAMAP-Rule" id="MF_01235"/>
    </source>
</evidence>
<sequence>MSVFTTLQQHIQRNGALIVSCQPVPGSPMDSPEIVAAMATAAAQAGAAALRIEGVANLQAVRPHVSLPIIGIIKRDLDESPVRITPFLRDIDDLVQAGADIIAFDGTQRPRPERREALLARIQHHGRLAMADCSSLEDGLYCQRLGCDFIGTTLSGYTHGETPCEPDFALVHALSNAGCRVIAEGRYNTPAQAAQALSQGAWAVTVGSAITRIEHICQWYCQALQAEAHHEYAGH</sequence>
<gene>
    <name evidence="1" type="primary">nanE</name>
    <name type="ordered locus">NT01EI_0599</name>
</gene>
<keyword id="KW-0119">Carbohydrate metabolism</keyword>
<keyword id="KW-0413">Isomerase</keyword>